<accession>A6VCK6</accession>
<protein>
    <recommendedName>
        <fullName evidence="1">Phosphoglucosamine mutase</fullName>
        <ecNumber evidence="1">5.4.2.10</ecNumber>
    </recommendedName>
</protein>
<organism>
    <name type="scientific">Pseudomonas paraeruginosa (strain DSM 24068 / PA7)</name>
    <name type="common">Pseudomonas aeruginosa (strain PA7)</name>
    <dbReference type="NCBI Taxonomy" id="381754"/>
    <lineage>
        <taxon>Bacteria</taxon>
        <taxon>Pseudomonadati</taxon>
        <taxon>Pseudomonadota</taxon>
        <taxon>Gammaproteobacteria</taxon>
        <taxon>Pseudomonadales</taxon>
        <taxon>Pseudomonadaceae</taxon>
        <taxon>Pseudomonas</taxon>
        <taxon>Pseudomonas paraeruginosa</taxon>
    </lineage>
</organism>
<evidence type="ECO:0000255" key="1">
    <source>
        <dbReference type="HAMAP-Rule" id="MF_01554"/>
    </source>
</evidence>
<dbReference type="EC" id="5.4.2.10" evidence="1"/>
<dbReference type="EMBL" id="CP000744">
    <property type="protein sequence ID" value="ABR84452.1"/>
    <property type="molecule type" value="Genomic_DNA"/>
</dbReference>
<dbReference type="RefSeq" id="WP_012077489.1">
    <property type="nucleotide sequence ID" value="NC_009656.1"/>
</dbReference>
<dbReference type="SMR" id="A6VCK6"/>
<dbReference type="GeneID" id="77223286"/>
<dbReference type="KEGG" id="pap:PSPA7_5469"/>
<dbReference type="HOGENOM" id="CLU_016950_7_0_6"/>
<dbReference type="Proteomes" id="UP000001582">
    <property type="component" value="Chromosome"/>
</dbReference>
<dbReference type="GO" id="GO:0005829">
    <property type="term" value="C:cytosol"/>
    <property type="evidence" value="ECO:0007669"/>
    <property type="project" value="TreeGrafter"/>
</dbReference>
<dbReference type="GO" id="GO:0000287">
    <property type="term" value="F:magnesium ion binding"/>
    <property type="evidence" value="ECO:0007669"/>
    <property type="project" value="UniProtKB-UniRule"/>
</dbReference>
<dbReference type="GO" id="GO:0008966">
    <property type="term" value="F:phosphoglucosamine mutase activity"/>
    <property type="evidence" value="ECO:0007669"/>
    <property type="project" value="UniProtKB-UniRule"/>
</dbReference>
<dbReference type="GO" id="GO:0004615">
    <property type="term" value="F:phosphomannomutase activity"/>
    <property type="evidence" value="ECO:0007669"/>
    <property type="project" value="TreeGrafter"/>
</dbReference>
<dbReference type="GO" id="GO:0005975">
    <property type="term" value="P:carbohydrate metabolic process"/>
    <property type="evidence" value="ECO:0007669"/>
    <property type="project" value="InterPro"/>
</dbReference>
<dbReference type="GO" id="GO:0009252">
    <property type="term" value="P:peptidoglycan biosynthetic process"/>
    <property type="evidence" value="ECO:0007669"/>
    <property type="project" value="TreeGrafter"/>
</dbReference>
<dbReference type="GO" id="GO:0006048">
    <property type="term" value="P:UDP-N-acetylglucosamine biosynthetic process"/>
    <property type="evidence" value="ECO:0007669"/>
    <property type="project" value="TreeGrafter"/>
</dbReference>
<dbReference type="CDD" id="cd05802">
    <property type="entry name" value="GlmM"/>
    <property type="match status" value="1"/>
</dbReference>
<dbReference type="FunFam" id="3.30.310.50:FF:000001">
    <property type="entry name" value="Phosphoglucosamine mutase"/>
    <property type="match status" value="1"/>
</dbReference>
<dbReference type="FunFam" id="3.40.120.10:FF:000001">
    <property type="entry name" value="Phosphoglucosamine mutase"/>
    <property type="match status" value="1"/>
</dbReference>
<dbReference type="FunFam" id="3.40.120.10:FF:000003">
    <property type="entry name" value="Phosphoglucosamine mutase"/>
    <property type="match status" value="1"/>
</dbReference>
<dbReference type="Gene3D" id="3.40.120.10">
    <property type="entry name" value="Alpha-D-Glucose-1,6-Bisphosphate, subunit A, domain 3"/>
    <property type="match status" value="3"/>
</dbReference>
<dbReference type="Gene3D" id="3.30.310.50">
    <property type="entry name" value="Alpha-D-phosphohexomutase, C-terminal domain"/>
    <property type="match status" value="1"/>
</dbReference>
<dbReference type="HAMAP" id="MF_01554_B">
    <property type="entry name" value="GlmM_B"/>
    <property type="match status" value="1"/>
</dbReference>
<dbReference type="InterPro" id="IPR005844">
    <property type="entry name" value="A-D-PHexomutase_a/b/a-I"/>
</dbReference>
<dbReference type="InterPro" id="IPR016055">
    <property type="entry name" value="A-D-PHexomutase_a/b/a-I/II/III"/>
</dbReference>
<dbReference type="InterPro" id="IPR005845">
    <property type="entry name" value="A-D-PHexomutase_a/b/a-II"/>
</dbReference>
<dbReference type="InterPro" id="IPR005846">
    <property type="entry name" value="A-D-PHexomutase_a/b/a-III"/>
</dbReference>
<dbReference type="InterPro" id="IPR005843">
    <property type="entry name" value="A-D-PHexomutase_C"/>
</dbReference>
<dbReference type="InterPro" id="IPR036900">
    <property type="entry name" value="A-D-PHexomutase_C_sf"/>
</dbReference>
<dbReference type="InterPro" id="IPR016066">
    <property type="entry name" value="A-D-PHexomutase_CS"/>
</dbReference>
<dbReference type="InterPro" id="IPR005841">
    <property type="entry name" value="Alpha-D-phosphohexomutase_SF"/>
</dbReference>
<dbReference type="InterPro" id="IPR006352">
    <property type="entry name" value="GlmM_bact"/>
</dbReference>
<dbReference type="InterPro" id="IPR050060">
    <property type="entry name" value="Phosphoglucosamine_mutase"/>
</dbReference>
<dbReference type="NCBIfam" id="TIGR01455">
    <property type="entry name" value="glmM"/>
    <property type="match status" value="1"/>
</dbReference>
<dbReference type="NCBIfam" id="NF008139">
    <property type="entry name" value="PRK10887.1"/>
    <property type="match status" value="1"/>
</dbReference>
<dbReference type="PANTHER" id="PTHR42946:SF1">
    <property type="entry name" value="PHOSPHOGLUCOMUTASE (ALPHA-D-GLUCOSE-1,6-BISPHOSPHATE-DEPENDENT)"/>
    <property type="match status" value="1"/>
</dbReference>
<dbReference type="PANTHER" id="PTHR42946">
    <property type="entry name" value="PHOSPHOHEXOSE MUTASE"/>
    <property type="match status" value="1"/>
</dbReference>
<dbReference type="Pfam" id="PF02878">
    <property type="entry name" value="PGM_PMM_I"/>
    <property type="match status" value="1"/>
</dbReference>
<dbReference type="Pfam" id="PF02879">
    <property type="entry name" value="PGM_PMM_II"/>
    <property type="match status" value="1"/>
</dbReference>
<dbReference type="Pfam" id="PF02880">
    <property type="entry name" value="PGM_PMM_III"/>
    <property type="match status" value="1"/>
</dbReference>
<dbReference type="Pfam" id="PF00408">
    <property type="entry name" value="PGM_PMM_IV"/>
    <property type="match status" value="1"/>
</dbReference>
<dbReference type="PRINTS" id="PR00509">
    <property type="entry name" value="PGMPMM"/>
</dbReference>
<dbReference type="SUPFAM" id="SSF55957">
    <property type="entry name" value="Phosphoglucomutase, C-terminal domain"/>
    <property type="match status" value="1"/>
</dbReference>
<dbReference type="SUPFAM" id="SSF53738">
    <property type="entry name" value="Phosphoglucomutase, first 3 domains"/>
    <property type="match status" value="3"/>
</dbReference>
<dbReference type="PROSITE" id="PS00710">
    <property type="entry name" value="PGM_PMM"/>
    <property type="match status" value="1"/>
</dbReference>
<reference key="1">
    <citation type="submission" date="2007-06" db="EMBL/GenBank/DDBJ databases">
        <authorList>
            <person name="Dodson R.J."/>
            <person name="Harkins D."/>
            <person name="Paulsen I.T."/>
        </authorList>
    </citation>
    <scope>NUCLEOTIDE SEQUENCE [LARGE SCALE GENOMIC DNA]</scope>
    <source>
        <strain>DSM 24068 / PA7</strain>
    </source>
</reference>
<feature type="chain" id="PRO_1000068910" description="Phosphoglucosamine mutase">
    <location>
        <begin position="1"/>
        <end position="445"/>
    </location>
</feature>
<feature type="active site" description="Phosphoserine intermediate" evidence="1">
    <location>
        <position position="101"/>
    </location>
</feature>
<feature type="binding site" description="via phosphate group" evidence="1">
    <location>
        <position position="101"/>
    </location>
    <ligand>
        <name>Mg(2+)</name>
        <dbReference type="ChEBI" id="CHEBI:18420"/>
    </ligand>
</feature>
<feature type="binding site" evidence="1">
    <location>
        <position position="240"/>
    </location>
    <ligand>
        <name>Mg(2+)</name>
        <dbReference type="ChEBI" id="CHEBI:18420"/>
    </ligand>
</feature>
<feature type="binding site" evidence="1">
    <location>
        <position position="242"/>
    </location>
    <ligand>
        <name>Mg(2+)</name>
        <dbReference type="ChEBI" id="CHEBI:18420"/>
    </ligand>
</feature>
<feature type="binding site" evidence="1">
    <location>
        <position position="244"/>
    </location>
    <ligand>
        <name>Mg(2+)</name>
        <dbReference type="ChEBI" id="CHEBI:18420"/>
    </ligand>
</feature>
<feature type="modified residue" description="Phosphoserine" evidence="1">
    <location>
        <position position="101"/>
    </location>
</feature>
<gene>
    <name evidence="1" type="primary">glmM</name>
    <name type="ordered locus">PSPA7_5469</name>
</gene>
<keyword id="KW-0413">Isomerase</keyword>
<keyword id="KW-0460">Magnesium</keyword>
<keyword id="KW-0479">Metal-binding</keyword>
<keyword id="KW-0597">Phosphoprotein</keyword>
<proteinExistence type="inferred from homology"/>
<comment type="function">
    <text evidence="1">Catalyzes the conversion of glucosamine-6-phosphate to glucosamine-1-phosphate.</text>
</comment>
<comment type="catalytic activity">
    <reaction evidence="1">
        <text>alpha-D-glucosamine 1-phosphate = D-glucosamine 6-phosphate</text>
        <dbReference type="Rhea" id="RHEA:23424"/>
        <dbReference type="ChEBI" id="CHEBI:58516"/>
        <dbReference type="ChEBI" id="CHEBI:58725"/>
        <dbReference type="EC" id="5.4.2.10"/>
    </reaction>
</comment>
<comment type="cofactor">
    <cofactor evidence="1">
        <name>Mg(2+)</name>
        <dbReference type="ChEBI" id="CHEBI:18420"/>
    </cofactor>
    <text evidence="1">Binds 1 Mg(2+) ion per subunit.</text>
</comment>
<comment type="PTM">
    <text evidence="1">Activated by phosphorylation.</text>
</comment>
<comment type="similarity">
    <text evidence="1">Belongs to the phosphohexose mutase family.</text>
</comment>
<sequence length="445" mass="47834">MSRKYFGTDGIRGRVGEFPITPDFVLKLGWAVGMAFRRQGNCRVLIGKDTRSSGYMFESAFEAGLSASGADTLLLGPMPTPGIAYLTRTFHAEAGVVISASHNPHDDNGIKFFSGQGTKLPDDVELMIEELLDAPMTVVESARLGKVSRINDAAGRYIEFCKSSVPTSTDFNGLKVVLDCANGATYKIAPNVFRELGAEVTVLAASPNGLNINDKCGSTHLDGLQAAVIEHHADLGIAFDGDGDRVMMVDHTGAIVDGDELLFLIARDMQESGRLQGGVVGTLMSNLGLELALQDLHIPFVRAKVGDRYVMAELLARNWMLGGENSGHIVCCQNTTTGDAIIAALQVLMALKRRGQTLAEARQGIRKCPQVLINVRFKGESDPLEHPSVKEASARVTEQMGGRGRVLLRKSGTEPLVRVMVEGDEEATVRAHAEQLAKIVSEVCA</sequence>
<name>GLMM_PSEP7</name>